<comment type="function">
    <text evidence="7">Non-reducing polyketide synthase; part of the gene cluster that mediates the biosynthesis of the linear tetracyclic TAN-1612 neuropeptide Y receptor antagonist (PubMed:21866960). The decaketide backbone of TAN-1612 is synthesized by the non-reducing polyketide synthase adaA via condensation of one acetyl-CoA starter unit with 9 malonyl-CoA units. The FAD-dependent monooxygenase adaC then performs hydroxylation at C2 while the polaketide chain is still attached to the NRPKS adaA (PubMed:21866960). The alpha-hydroxylation step at C2 appears to be crucial for the following C18-C1 Claisen cyclization and release of the C9-hydroxyl version of TAN-1612 from the NRPKS adaA, two steps performed by the lactamase-like protein adaB (PubMed:21866960). Finally, the O-methyltransferase adaD performs the C9 O-methylation to complete the biosynthesis of TAN-1612 (PubMed:21866960).</text>
</comment>
<comment type="catalytic activity">
    <reaction evidence="7">
        <text>holo-[ACP] + 9 malonyl-CoA + acetyl-CoA + 9 H(+) = 3-(2,4-dioxopentyl)-3,6,8,9-tetrahydroxy-1-oxo-1,2,3,4-tetrahydroanthracene-2-carboxyl-[ACP] + 9 CO2 + 10 CoA + 2 H2O</text>
        <dbReference type="Rhea" id="RHEA:64088"/>
        <dbReference type="Rhea" id="RHEA-COMP:9685"/>
        <dbReference type="Rhea" id="RHEA-COMP:16518"/>
        <dbReference type="ChEBI" id="CHEBI:15377"/>
        <dbReference type="ChEBI" id="CHEBI:15378"/>
        <dbReference type="ChEBI" id="CHEBI:16526"/>
        <dbReference type="ChEBI" id="CHEBI:57287"/>
        <dbReference type="ChEBI" id="CHEBI:57288"/>
        <dbReference type="ChEBI" id="CHEBI:57384"/>
        <dbReference type="ChEBI" id="CHEBI:64479"/>
        <dbReference type="ChEBI" id="CHEBI:149687"/>
    </reaction>
    <physiologicalReaction direction="left-to-right" evidence="7">
        <dbReference type="Rhea" id="RHEA:64089"/>
    </physiologicalReaction>
</comment>
<comment type="cofactor">
    <cofactor evidence="1">
        <name>pantetheine 4'-phosphate</name>
        <dbReference type="ChEBI" id="CHEBI:47942"/>
    </cofactor>
    <text evidence="2">Binds 1 phosphopantetheine covalently.</text>
</comment>
<comment type="pathway">
    <text evidence="7">Secondary metabolite biosynthesis.</text>
</comment>
<comment type="domain">
    <text evidence="9">Multidomain protein; including a starter unit:ACP transacylase (SAT) that selects the starter unit; a ketosynthase (KS) that catalyzes repeated decarboxylative condensation to elongate the polyketide backbone; a malonyl-CoA:ACP transacylase (MAT) that selects and transfers the extender unit malonyl-CoA; a product template (PT) domain that controls the immediate cyclization regioselectivity of the reactive polyketide backbone; and an acyl-carrier protein (ACP) that serves as the tether of the growing and completed polyketide via its phosphopantetheinyl arm.</text>
</comment>
<reference key="1">
    <citation type="journal article" date="2007" name="Nat. Biotechnol.">
        <title>Genome sequencing and analysis of the versatile cell factory Aspergillus niger CBS 513.88.</title>
        <authorList>
            <person name="Pel H.J."/>
            <person name="de Winde J.H."/>
            <person name="Archer D.B."/>
            <person name="Dyer P.S."/>
            <person name="Hofmann G."/>
            <person name="Schaap P.J."/>
            <person name="Turner G."/>
            <person name="de Vries R.P."/>
            <person name="Albang R."/>
            <person name="Albermann K."/>
            <person name="Andersen M.R."/>
            <person name="Bendtsen J.D."/>
            <person name="Benen J.A.E."/>
            <person name="van den Berg M."/>
            <person name="Breestraat S."/>
            <person name="Caddick M.X."/>
            <person name="Contreras R."/>
            <person name="Cornell M."/>
            <person name="Coutinho P.M."/>
            <person name="Danchin E.G.J."/>
            <person name="Debets A.J.M."/>
            <person name="Dekker P."/>
            <person name="van Dijck P.W.M."/>
            <person name="van Dijk A."/>
            <person name="Dijkhuizen L."/>
            <person name="Driessen A.J.M."/>
            <person name="d'Enfert C."/>
            <person name="Geysens S."/>
            <person name="Goosen C."/>
            <person name="Groot G.S.P."/>
            <person name="de Groot P.W.J."/>
            <person name="Guillemette T."/>
            <person name="Henrissat B."/>
            <person name="Herweijer M."/>
            <person name="van den Hombergh J.P.T.W."/>
            <person name="van den Hondel C.A.M.J.J."/>
            <person name="van der Heijden R.T.J.M."/>
            <person name="van der Kaaij R.M."/>
            <person name="Klis F.M."/>
            <person name="Kools H.J."/>
            <person name="Kubicek C.P."/>
            <person name="van Kuyk P.A."/>
            <person name="Lauber J."/>
            <person name="Lu X."/>
            <person name="van der Maarel M.J.E.C."/>
            <person name="Meulenberg R."/>
            <person name="Menke H."/>
            <person name="Mortimer M.A."/>
            <person name="Nielsen J."/>
            <person name="Oliver S.G."/>
            <person name="Olsthoorn M."/>
            <person name="Pal K."/>
            <person name="van Peij N.N.M.E."/>
            <person name="Ram A.F.J."/>
            <person name="Rinas U."/>
            <person name="Roubos J.A."/>
            <person name="Sagt C.M.J."/>
            <person name="Schmoll M."/>
            <person name="Sun J."/>
            <person name="Ussery D."/>
            <person name="Varga J."/>
            <person name="Vervecken W."/>
            <person name="van de Vondervoort P.J.J."/>
            <person name="Wedler H."/>
            <person name="Woesten H.A.B."/>
            <person name="Zeng A.-P."/>
            <person name="van Ooyen A.J.J."/>
            <person name="Visser J."/>
            <person name="Stam H."/>
        </authorList>
    </citation>
    <scope>NUCLEOTIDE SEQUENCE [LARGE SCALE GENOMIC DNA]</scope>
    <source>
        <strain>ATCC MYA-4892 / CBS 513.88 / FGSC A1513</strain>
    </source>
</reference>
<reference key="2">
    <citation type="journal article" date="2011" name="J. Am. Chem. Soc.">
        <title>Comparative characterization of fungal anthracenone and naphthacenedione biosynthetic pathways reveals an alpha-hydroxylation-dependent Claisen-like cyclization catalyzed by a dimanganese thioesterase.</title>
        <authorList>
            <person name="Li Y."/>
            <person name="Chooi Y.H."/>
            <person name="Sheng Y."/>
            <person name="Valentine J.S."/>
            <person name="Tang Y."/>
        </authorList>
    </citation>
    <scope>IDENTIFICATION</scope>
    <scope>DOMAIN</scope>
    <scope>FUNCTION</scope>
    <scope>CATALYTIC ACTIVITY</scope>
    <scope>PATHWAY</scope>
</reference>
<keyword id="KW-0012">Acyltransferase</keyword>
<keyword id="KW-0596">Phosphopantetheine</keyword>
<keyword id="KW-0597">Phosphoprotein</keyword>
<keyword id="KW-1185">Reference proteome</keyword>
<keyword id="KW-0808">Transferase</keyword>
<organism>
    <name type="scientific">Aspergillus niger (strain ATCC MYA-4892 / CBS 513.88 / FGSC A1513)</name>
    <dbReference type="NCBI Taxonomy" id="425011"/>
    <lineage>
        <taxon>Eukaryota</taxon>
        <taxon>Fungi</taxon>
        <taxon>Dikarya</taxon>
        <taxon>Ascomycota</taxon>
        <taxon>Pezizomycotina</taxon>
        <taxon>Eurotiomycetes</taxon>
        <taxon>Eurotiomycetidae</taxon>
        <taxon>Eurotiales</taxon>
        <taxon>Aspergillaceae</taxon>
        <taxon>Aspergillus</taxon>
        <taxon>Aspergillus subgen. Circumdati</taxon>
    </lineage>
</organism>
<protein>
    <recommendedName>
        <fullName evidence="8">Non-reducing polyketide synthase adaA</fullName>
        <shortName evidence="8">NRPKS adaA</shortName>
        <ecNumber evidence="7">2.3.1.-</ecNumber>
    </recommendedName>
    <alternativeName>
        <fullName evidence="8">2-acetyl-2-decarboxamidoanthrotainin biosynthesis cluster protein A</fullName>
    </alternativeName>
</protein>
<proteinExistence type="evidence at protein level"/>
<evidence type="ECO:0000250" key="1">
    <source>
        <dbReference type="UniProtKB" id="A0A0K0MCJ4"/>
    </source>
</evidence>
<evidence type="ECO:0000255" key="2"/>
<evidence type="ECO:0000255" key="3">
    <source>
        <dbReference type="PROSITE-ProRule" id="PRU00258"/>
    </source>
</evidence>
<evidence type="ECO:0000255" key="4">
    <source>
        <dbReference type="PROSITE-ProRule" id="PRU01348"/>
    </source>
</evidence>
<evidence type="ECO:0000255" key="5">
    <source>
        <dbReference type="PROSITE-ProRule" id="PRU01363"/>
    </source>
</evidence>
<evidence type="ECO:0000256" key="6">
    <source>
        <dbReference type="SAM" id="MobiDB-lite"/>
    </source>
</evidence>
<evidence type="ECO:0000269" key="7">
    <source>
    </source>
</evidence>
<evidence type="ECO:0000303" key="8">
    <source>
    </source>
</evidence>
<evidence type="ECO:0000305" key="9">
    <source>
    </source>
</evidence>
<name>ADAA_ASPNC</name>
<gene>
    <name evidence="8" type="primary">adaA</name>
    <name type="ORF">An11g07310</name>
</gene>
<accession>A2QX22</accession>
<dbReference type="EC" id="2.3.1.-" evidence="7"/>
<dbReference type="EMBL" id="AM270243">
    <property type="protein sequence ID" value="CAK40778.1"/>
    <property type="molecule type" value="Genomic_DNA"/>
</dbReference>
<dbReference type="RefSeq" id="XP_001394705.1">
    <property type="nucleotide sequence ID" value="XM_001394668.1"/>
</dbReference>
<dbReference type="SMR" id="A2QX22"/>
<dbReference type="EnsemblFungi" id="CAK40778">
    <property type="protein sequence ID" value="CAK40778"/>
    <property type="gene ID" value="An11g07310"/>
</dbReference>
<dbReference type="GeneID" id="4984951"/>
<dbReference type="KEGG" id="ang:An11g07310"/>
<dbReference type="VEuPathDB" id="FungiDB:An11g07310"/>
<dbReference type="HOGENOM" id="CLU_000022_6_1_1"/>
<dbReference type="Proteomes" id="UP000006706">
    <property type="component" value="Chromosome 7R"/>
</dbReference>
<dbReference type="GO" id="GO:0004315">
    <property type="term" value="F:3-oxoacyl-[acyl-carrier-protein] synthase activity"/>
    <property type="evidence" value="ECO:0007669"/>
    <property type="project" value="InterPro"/>
</dbReference>
<dbReference type="GO" id="GO:0004312">
    <property type="term" value="F:fatty acid synthase activity"/>
    <property type="evidence" value="ECO:0007669"/>
    <property type="project" value="TreeGrafter"/>
</dbReference>
<dbReference type="GO" id="GO:0031177">
    <property type="term" value="F:phosphopantetheine binding"/>
    <property type="evidence" value="ECO:0007669"/>
    <property type="project" value="InterPro"/>
</dbReference>
<dbReference type="GO" id="GO:0006633">
    <property type="term" value="P:fatty acid biosynthetic process"/>
    <property type="evidence" value="ECO:0007669"/>
    <property type="project" value="InterPro"/>
</dbReference>
<dbReference type="GO" id="GO:0019748">
    <property type="term" value="P:secondary metabolic process"/>
    <property type="evidence" value="ECO:0000303"/>
    <property type="project" value="AspGD"/>
</dbReference>
<dbReference type="GO" id="GO:0044550">
    <property type="term" value="P:secondary metabolite biosynthetic process"/>
    <property type="evidence" value="ECO:0007669"/>
    <property type="project" value="TreeGrafter"/>
</dbReference>
<dbReference type="CDD" id="cd00833">
    <property type="entry name" value="PKS"/>
    <property type="match status" value="1"/>
</dbReference>
<dbReference type="FunFam" id="3.40.366.10:FF:000017">
    <property type="entry name" value="Non-reducing polyketide synthase aptA"/>
    <property type="match status" value="1"/>
</dbReference>
<dbReference type="FunFam" id="1.10.1200.10:FF:000011">
    <property type="entry name" value="Sterigmatocystin biosynthesis polyketide synthase"/>
    <property type="match status" value="1"/>
</dbReference>
<dbReference type="FunFam" id="3.10.129.110:FF:000001">
    <property type="entry name" value="Sterigmatocystin biosynthesis polyketide synthase"/>
    <property type="match status" value="1"/>
</dbReference>
<dbReference type="FunFam" id="3.40.47.10:FF:000031">
    <property type="entry name" value="Sterigmatocystin biosynthesis polyketide synthase"/>
    <property type="match status" value="1"/>
</dbReference>
<dbReference type="Gene3D" id="3.30.70.3290">
    <property type="match status" value="1"/>
</dbReference>
<dbReference type="Gene3D" id="3.40.47.10">
    <property type="match status" value="1"/>
</dbReference>
<dbReference type="Gene3D" id="1.10.1200.10">
    <property type="entry name" value="ACP-like"/>
    <property type="match status" value="1"/>
</dbReference>
<dbReference type="Gene3D" id="3.40.366.10">
    <property type="entry name" value="Malonyl-Coenzyme A Acyl Carrier Protein, domain 2"/>
    <property type="match status" value="2"/>
</dbReference>
<dbReference type="Gene3D" id="3.10.129.110">
    <property type="entry name" value="Polyketide synthase dehydratase"/>
    <property type="match status" value="1"/>
</dbReference>
<dbReference type="InterPro" id="IPR001227">
    <property type="entry name" value="Ac_transferase_dom_sf"/>
</dbReference>
<dbReference type="InterPro" id="IPR036736">
    <property type="entry name" value="ACP-like_sf"/>
</dbReference>
<dbReference type="InterPro" id="IPR014043">
    <property type="entry name" value="Acyl_transferase_dom"/>
</dbReference>
<dbReference type="InterPro" id="IPR016035">
    <property type="entry name" value="Acyl_Trfase/lysoPLipase"/>
</dbReference>
<dbReference type="InterPro" id="IPR018201">
    <property type="entry name" value="Ketoacyl_synth_AS"/>
</dbReference>
<dbReference type="InterPro" id="IPR014031">
    <property type="entry name" value="Ketoacyl_synth_C"/>
</dbReference>
<dbReference type="InterPro" id="IPR014030">
    <property type="entry name" value="Ketoacyl_synth_N"/>
</dbReference>
<dbReference type="InterPro" id="IPR016036">
    <property type="entry name" value="Malonyl_transacylase_ACP-bd"/>
</dbReference>
<dbReference type="InterPro" id="IPR020841">
    <property type="entry name" value="PKS_Beta-ketoAc_synthase_dom"/>
</dbReference>
<dbReference type="InterPro" id="IPR042104">
    <property type="entry name" value="PKS_dehydratase_sf"/>
</dbReference>
<dbReference type="InterPro" id="IPR049900">
    <property type="entry name" value="PKS_mFAS_DH"/>
</dbReference>
<dbReference type="InterPro" id="IPR050091">
    <property type="entry name" value="PKS_NRPS_Biosynth_Enz"/>
</dbReference>
<dbReference type="InterPro" id="IPR020806">
    <property type="entry name" value="PKS_PP-bd"/>
</dbReference>
<dbReference type="InterPro" id="IPR009081">
    <property type="entry name" value="PP-bd_ACP"/>
</dbReference>
<dbReference type="InterPro" id="IPR030918">
    <property type="entry name" value="PT_fungal_PKS"/>
</dbReference>
<dbReference type="InterPro" id="IPR032088">
    <property type="entry name" value="SAT"/>
</dbReference>
<dbReference type="InterPro" id="IPR016039">
    <property type="entry name" value="Thiolase-like"/>
</dbReference>
<dbReference type="NCBIfam" id="TIGR04532">
    <property type="entry name" value="PT_fungal_PKS"/>
    <property type="match status" value="1"/>
</dbReference>
<dbReference type="PANTHER" id="PTHR43775">
    <property type="entry name" value="FATTY ACID SYNTHASE"/>
    <property type="match status" value="1"/>
</dbReference>
<dbReference type="PANTHER" id="PTHR43775:SF24">
    <property type="entry name" value="NON-REDUCING POLYKETIDE SYNTHASE APTA-RELATED"/>
    <property type="match status" value="1"/>
</dbReference>
<dbReference type="Pfam" id="PF00698">
    <property type="entry name" value="Acyl_transf_1"/>
    <property type="match status" value="1"/>
</dbReference>
<dbReference type="Pfam" id="PF22621">
    <property type="entry name" value="CurL-like_PKS_C"/>
    <property type="match status" value="1"/>
</dbReference>
<dbReference type="Pfam" id="PF00109">
    <property type="entry name" value="ketoacyl-synt"/>
    <property type="match status" value="1"/>
</dbReference>
<dbReference type="Pfam" id="PF02801">
    <property type="entry name" value="Ketoacyl-synt_C"/>
    <property type="match status" value="1"/>
</dbReference>
<dbReference type="Pfam" id="PF00550">
    <property type="entry name" value="PP-binding"/>
    <property type="match status" value="1"/>
</dbReference>
<dbReference type="Pfam" id="PF16073">
    <property type="entry name" value="SAT"/>
    <property type="match status" value="1"/>
</dbReference>
<dbReference type="SMART" id="SM00827">
    <property type="entry name" value="PKS_AT"/>
    <property type="match status" value="1"/>
</dbReference>
<dbReference type="SMART" id="SM00825">
    <property type="entry name" value="PKS_KS"/>
    <property type="match status" value="1"/>
</dbReference>
<dbReference type="SMART" id="SM00823">
    <property type="entry name" value="PKS_PP"/>
    <property type="match status" value="1"/>
</dbReference>
<dbReference type="SUPFAM" id="SSF47336">
    <property type="entry name" value="ACP-like"/>
    <property type="match status" value="1"/>
</dbReference>
<dbReference type="SUPFAM" id="SSF52151">
    <property type="entry name" value="FabD/lysophospholipase-like"/>
    <property type="match status" value="1"/>
</dbReference>
<dbReference type="SUPFAM" id="SSF55048">
    <property type="entry name" value="Probable ACP-binding domain of malonyl-CoA ACP transacylase"/>
    <property type="match status" value="1"/>
</dbReference>
<dbReference type="SUPFAM" id="SSF53901">
    <property type="entry name" value="Thiolase-like"/>
    <property type="match status" value="1"/>
</dbReference>
<dbReference type="PROSITE" id="PS50075">
    <property type="entry name" value="CARRIER"/>
    <property type="match status" value="1"/>
</dbReference>
<dbReference type="PROSITE" id="PS00606">
    <property type="entry name" value="KS3_1"/>
    <property type="match status" value="1"/>
</dbReference>
<dbReference type="PROSITE" id="PS52004">
    <property type="entry name" value="KS3_2"/>
    <property type="match status" value="1"/>
</dbReference>
<dbReference type="PROSITE" id="PS52019">
    <property type="entry name" value="PKS_MFAS_DH"/>
    <property type="match status" value="1"/>
</dbReference>
<feature type="chain" id="PRO_0000446354" description="Non-reducing polyketide synthase adaA">
    <location>
        <begin position="1"/>
        <end position="1793"/>
    </location>
</feature>
<feature type="domain" description="Ketosynthase family 3 (KS3)" evidence="4 9">
    <location>
        <begin position="388"/>
        <end position="821"/>
    </location>
</feature>
<feature type="domain" description="PKS/mFAS DH" evidence="5">
    <location>
        <begin position="1316"/>
        <end position="1629"/>
    </location>
</feature>
<feature type="domain" description="Carrier" evidence="3 9">
    <location>
        <begin position="1716"/>
        <end position="1793"/>
    </location>
</feature>
<feature type="region of interest" description="N-terminal acylcarrier protein transacylase domain (SAT)" evidence="2 9">
    <location>
        <begin position="16"/>
        <end position="250"/>
    </location>
</feature>
<feature type="region of interest" description="Malonyl-CoA:ACP transacylase (MAT) domain" evidence="2 9">
    <location>
        <begin position="923"/>
        <end position="1245"/>
    </location>
</feature>
<feature type="region of interest" description="Product template (PT) domain" evidence="2 9">
    <location>
        <begin position="1312"/>
        <end position="1634"/>
    </location>
</feature>
<feature type="region of interest" description="N-terminal hotdog fold" evidence="5">
    <location>
        <begin position="1316"/>
        <end position="1452"/>
    </location>
</feature>
<feature type="region of interest" description="C-terminal hotdog fold" evidence="5">
    <location>
        <begin position="1482"/>
        <end position="1629"/>
    </location>
</feature>
<feature type="region of interest" description="Disordered" evidence="6">
    <location>
        <begin position="1642"/>
        <end position="1714"/>
    </location>
</feature>
<feature type="compositionally biased region" description="Low complexity" evidence="6">
    <location>
        <begin position="1642"/>
        <end position="1659"/>
    </location>
</feature>
<feature type="compositionally biased region" description="Polar residues" evidence="6">
    <location>
        <begin position="1660"/>
        <end position="1681"/>
    </location>
</feature>
<feature type="compositionally biased region" description="Low complexity" evidence="6">
    <location>
        <begin position="1683"/>
        <end position="1706"/>
    </location>
</feature>
<feature type="active site" description="For beta-ketoacyl synthase activity" evidence="4">
    <location>
        <position position="561"/>
    </location>
</feature>
<feature type="active site" description="For beta-ketoacyl synthase activity" evidence="4">
    <location>
        <position position="696"/>
    </location>
</feature>
<feature type="active site" description="For beta-ketoacyl synthase activity" evidence="4">
    <location>
        <position position="739"/>
    </location>
</feature>
<feature type="active site" description="Proton acceptor; for dehydratase activity" evidence="5">
    <location>
        <position position="1348"/>
    </location>
</feature>
<feature type="active site" description="Proton donor; for dehydratase activity" evidence="5">
    <location>
        <position position="1540"/>
    </location>
</feature>
<feature type="modified residue" description="O-(pantetheine 4'-phosphoryl)serine" evidence="3">
    <location>
        <position position="1753"/>
    </location>
</feature>
<sequence>MSGPTKLVFFGNEFPNDDLKALFRGLHRHGKDRRFRQLATFLEESTRVLQNEVAQLPEPLKKLVPHFENLMPLTEVDFRQGPLGAAMESALLTILELGMFIGHYEAEERVWDLSADRTTLAGLSIGLLAAAGVALSTHLAEVVQNGAECVRVSFRLGVYVHDISRKLEAPQADGSLLSWAHVVTGETASDLQEELSRYNTETGTPELLKVFISAADKTSVSVSGPPSRIRAAFRASQRLRYSKSLALPVYDGLCHAAHLYDEETIHRVLHPDGSVIPTSRPVQLALLSSRSGQPFEATTAAELFRAISTELLTGTIFLDNITAGILDRTERCADAPQCQIETYRTSLVFKGLLKALEACFPDRTISTTDLIPWVFQDYGARQPKSYADSKLAIVGMACRMPGGANDLDLFWELLAQGRDTHTTVPADRFDLETHYDPTGETENATRTPFGNFIDQPGLFDAGFFNMSPREAEQTDPMHRLALVTAYEALEMAGIVSGRTPSSNPKRIATFYGQASDDWRELNASQNIGTYAVPGGERAFANGRINYFFKFGGPSFNLDTACSSGLAAVQAACSALWAGEADTVLAGGLNIITDPDNYAGLGNGHFLSRTGQCKVWDQSADGYCRADGVGSVVIKRLEDAEADNDNILAVVLSAATNHSAEAISITHPHAGAQKENYTQVLHQAAVNPLDISYVELHGTGTQAGDAQEAESVLDIFAPRAHRRRADQPLHLGAVKSNIGHGEAAAGIASLLKVLLMYQKNEIPAHIGIPTVINPAIPTDLEQRQVYLPRTKTAWPRAAGQIRRAIVNSFGAHGGNTTLVLEDAPEKQVTVAREERSTHPVVISAKSKKSLAANVETLLAYLDENPETDLGDLSYTTCARRMHHSWRLATAVSDIPALQKFLRNAVSNDAVSQTRPIPTEAPHVVFTFTGQGAYYAGLAQGLFQALPFFRAEVRQLDHLSQRLGFPSIVPVILGEVEEGTATALVTQLSIVIVEIALARLWLLLLGIPAPHAVIGHSLGEYAALAVAGVLSTADALYLVGHRAQLIEEHCTPGSHAMLSVRATIADIERLVGTGADAPTYELSCQNTHQDTVIGGSIQDLNAIREKLEPEGIKCVNVDVPFAFHTAQMDAVRERLAKAVAAVPFKTPSVPVLSPLLGSVVFDGKSINPEYIVRATREPVRFATAIDAAQELGIVNSQTLWVDIGPHPICASFVRSLVPGARIVSSCRRNEDNFATMAKSLCTLHLAGRTPSWAEYFRPDEQAYSLLRLPKYRWNEVNYWIQYLGTWTLDKAHLKNGGSQKRTITDVPSVSSLRTSLIHQVTEETVDKTTATLKAISDIQHPDFLEAVHGHTMNNCGVATSSIWTDMAMTVGEHLYRRLVPGTDHVLMDLCDFEVQHAQVANTNSNTPQPLALEAHLDLPTRHMSLAWYDVNATTNQRADAPFATGSIKYPADPTGAAWSIEWSRITHLIQGRIEALQHLAAENKASTLSKPLAYALFKNVVDYAPRYRGMDRVVIHDHEAFSDITLTTDRHGTWHTPPHWIDSVSHLAGLVMNGSDASNTRDFFYVTPGCGSCRMTEPLIAGGKYRNYVRMFPMPDEAHMYAGDLYILREDKIIGVVEQLKFRRVPRLLMDRFFSPNKNAAAHAAPAPAPAAVPAVKKQPPTETIQPQAPKTEQKQDQLQLPNLASAAPSTANSSSSPSSSGVATPTTEQEAPVADASAVTGVAGKCLELIANETGLGVAELTADATFVQLGVDSLMSLVLSEKLRSEMGLEIKSSLFLECPTVGDLTGWLEQYC</sequence>